<name>MATK_VATMA</name>
<protein>
    <recommendedName>
        <fullName evidence="1">Maturase K</fullName>
    </recommendedName>
    <alternativeName>
        <fullName evidence="1">Intron maturase</fullName>
    </alternativeName>
</protein>
<sequence length="509" mass="60877">MEEYQVFXVYLELDRSRQQDFLYPLIFREYIYGLAYGHDLNRPILMENIGYDNKSSLLIAKRLIIRMYQQNHFIISANDSNKNQFLGYNNNLYSQIISEGFAVVVEIPFSLQLSYSLEEAEIVKSYKNFRSIHSIFPFFEEKFSYLKYVSDVRIPYPIHLEISVQTLRYWVKDAPFFHLLRLFLYEYCNSIITPKKPISTFSKRKSNPRIFLFLYNFYVCEYESIFLFLRNKSSHLRLTSFSVLFERIYFYAKIEHLVEVFTGDYSSTLSFFKDLFIHYVRYQGKSILASKNVPLLMNKWKYYLIHLWQCHFDVWSQPGTIHINLLYKHSHFFXGYFSNVQLNLSVVRSQMLENSFLIEIVMKKFHTKVPIISLIRSLAKAKFCNVLGHPISNPVWADSSDFDIIDRFLRICRNLSHYYNGSSKKXSLYRIKYILRLSCIKTLARKHKSTVCAFLKILGSEELLEEFFTEEEEILSLIFPRTSYTLKRLYRGRIWYLDIIFSNDLVNRE</sequence>
<feature type="chain" id="PRO_0000143777" description="Maturase K">
    <location>
        <begin position="1"/>
        <end position="509"/>
    </location>
</feature>
<gene>
    <name evidence="1" type="primary">matK</name>
</gene>
<geneLocation type="chloroplast"/>
<dbReference type="EMBL" id="AY386927">
    <property type="protein sequence ID" value="AAQ92005.1"/>
    <property type="molecule type" value="Genomic_DNA"/>
</dbReference>
<dbReference type="GO" id="GO:0009507">
    <property type="term" value="C:chloroplast"/>
    <property type="evidence" value="ECO:0007669"/>
    <property type="project" value="UniProtKB-SubCell"/>
</dbReference>
<dbReference type="GO" id="GO:0003723">
    <property type="term" value="F:RNA binding"/>
    <property type="evidence" value="ECO:0007669"/>
    <property type="project" value="UniProtKB-KW"/>
</dbReference>
<dbReference type="GO" id="GO:0006397">
    <property type="term" value="P:mRNA processing"/>
    <property type="evidence" value="ECO:0007669"/>
    <property type="project" value="UniProtKB-KW"/>
</dbReference>
<dbReference type="GO" id="GO:0008380">
    <property type="term" value="P:RNA splicing"/>
    <property type="evidence" value="ECO:0007669"/>
    <property type="project" value="UniProtKB-UniRule"/>
</dbReference>
<dbReference type="GO" id="GO:0008033">
    <property type="term" value="P:tRNA processing"/>
    <property type="evidence" value="ECO:0007669"/>
    <property type="project" value="UniProtKB-KW"/>
</dbReference>
<dbReference type="HAMAP" id="MF_01390">
    <property type="entry name" value="MatK"/>
    <property type="match status" value="1"/>
</dbReference>
<dbReference type="InterPro" id="IPR024937">
    <property type="entry name" value="Domain_X"/>
</dbReference>
<dbReference type="InterPro" id="IPR002866">
    <property type="entry name" value="Maturase_MatK"/>
</dbReference>
<dbReference type="InterPro" id="IPR024942">
    <property type="entry name" value="Maturase_MatK_N"/>
</dbReference>
<dbReference type="PANTHER" id="PTHR34811">
    <property type="entry name" value="MATURASE K"/>
    <property type="match status" value="1"/>
</dbReference>
<dbReference type="PANTHER" id="PTHR34811:SF1">
    <property type="entry name" value="MATURASE K"/>
    <property type="match status" value="1"/>
</dbReference>
<dbReference type="Pfam" id="PF01348">
    <property type="entry name" value="Intron_maturas2"/>
    <property type="match status" value="1"/>
</dbReference>
<dbReference type="Pfam" id="PF01824">
    <property type="entry name" value="MatK_N"/>
    <property type="match status" value="1"/>
</dbReference>
<reference key="1">
    <citation type="journal article" date="2004" name="Am. J. Bot.">
        <title>A phylogeny of legumes (Leguminosae) based on analysis of the plastid matK gene resolves many well-supported subclades within the family.</title>
        <authorList>
            <person name="Wojciechowski M.F."/>
            <person name="Lavin M."/>
            <person name="Sanderson M.J."/>
        </authorList>
        <dbReference type="AGRICOLA" id="IND43661289"/>
    </citation>
    <scope>NUCLEOTIDE SEQUENCE [GENOMIC DNA]</scope>
</reference>
<evidence type="ECO:0000255" key="1">
    <source>
        <dbReference type="HAMAP-Rule" id="MF_01390"/>
    </source>
</evidence>
<accession>Q5YJX5</accession>
<keyword id="KW-0150">Chloroplast</keyword>
<keyword id="KW-0507">mRNA processing</keyword>
<keyword id="KW-0934">Plastid</keyword>
<keyword id="KW-0694">RNA-binding</keyword>
<keyword id="KW-0819">tRNA processing</keyword>
<organism>
    <name type="scientific">Vatairea macrocarpa</name>
    <dbReference type="NCBI Taxonomy" id="77050"/>
    <lineage>
        <taxon>Eukaryota</taxon>
        <taxon>Viridiplantae</taxon>
        <taxon>Streptophyta</taxon>
        <taxon>Embryophyta</taxon>
        <taxon>Tracheophyta</taxon>
        <taxon>Spermatophyta</taxon>
        <taxon>Magnoliopsida</taxon>
        <taxon>eudicotyledons</taxon>
        <taxon>Gunneridae</taxon>
        <taxon>Pentapetalae</taxon>
        <taxon>rosids</taxon>
        <taxon>fabids</taxon>
        <taxon>Fabales</taxon>
        <taxon>Fabaceae</taxon>
        <taxon>Papilionoideae</taxon>
        <taxon>50 kb inversion clade</taxon>
        <taxon>vataireoid clade</taxon>
        <taxon>Vatairea</taxon>
    </lineage>
</organism>
<comment type="function">
    <text evidence="1">Usually encoded in the trnK tRNA gene intron. Probably assists in splicing its own and other chloroplast group II introns.</text>
</comment>
<comment type="subcellular location">
    <subcellularLocation>
        <location>Plastid</location>
        <location>Chloroplast</location>
    </subcellularLocation>
</comment>
<comment type="similarity">
    <text evidence="1">Belongs to the intron maturase 2 family. MatK subfamily.</text>
</comment>
<proteinExistence type="inferred from homology"/>